<feature type="chain" id="PRO_0000160849" description="L-threonine 3-dehydrogenase">
    <location>
        <begin position="1"/>
        <end position="345"/>
    </location>
</feature>
<feature type="active site" description="Charge relay system" evidence="1">
    <location>
        <position position="40"/>
    </location>
</feature>
<feature type="active site" description="Charge relay system" evidence="1">
    <location>
        <position position="43"/>
    </location>
</feature>
<feature type="binding site" evidence="1">
    <location>
        <position position="38"/>
    </location>
    <ligand>
        <name>Zn(2+)</name>
        <dbReference type="ChEBI" id="CHEBI:29105"/>
        <label>1</label>
        <note>catalytic</note>
    </ligand>
</feature>
<feature type="binding site" evidence="1">
    <location>
        <position position="63"/>
    </location>
    <ligand>
        <name>Zn(2+)</name>
        <dbReference type="ChEBI" id="CHEBI:29105"/>
        <label>1</label>
        <note>catalytic</note>
    </ligand>
</feature>
<feature type="binding site" evidence="1">
    <location>
        <position position="64"/>
    </location>
    <ligand>
        <name>Zn(2+)</name>
        <dbReference type="ChEBI" id="CHEBI:29105"/>
        <label>1</label>
        <note>catalytic</note>
    </ligand>
</feature>
<feature type="binding site" evidence="1">
    <location>
        <position position="93"/>
    </location>
    <ligand>
        <name>Zn(2+)</name>
        <dbReference type="ChEBI" id="CHEBI:29105"/>
        <label>2</label>
    </ligand>
</feature>
<feature type="binding site" evidence="1">
    <location>
        <position position="96"/>
    </location>
    <ligand>
        <name>Zn(2+)</name>
        <dbReference type="ChEBI" id="CHEBI:29105"/>
        <label>2</label>
    </ligand>
</feature>
<feature type="binding site" evidence="1">
    <location>
        <position position="99"/>
    </location>
    <ligand>
        <name>Zn(2+)</name>
        <dbReference type="ChEBI" id="CHEBI:29105"/>
        <label>2</label>
    </ligand>
</feature>
<feature type="binding site" evidence="1">
    <location>
        <position position="107"/>
    </location>
    <ligand>
        <name>Zn(2+)</name>
        <dbReference type="ChEBI" id="CHEBI:29105"/>
        <label>2</label>
    </ligand>
</feature>
<feature type="binding site" evidence="1">
    <location>
        <position position="176"/>
    </location>
    <ligand>
        <name>NAD(+)</name>
        <dbReference type="ChEBI" id="CHEBI:57540"/>
    </ligand>
</feature>
<feature type="binding site" evidence="1">
    <location>
        <position position="196"/>
    </location>
    <ligand>
        <name>NAD(+)</name>
        <dbReference type="ChEBI" id="CHEBI:57540"/>
    </ligand>
</feature>
<feature type="binding site" evidence="1">
    <location>
        <position position="201"/>
    </location>
    <ligand>
        <name>NAD(+)</name>
        <dbReference type="ChEBI" id="CHEBI:57540"/>
    </ligand>
</feature>
<feature type="binding site" evidence="1">
    <location>
        <begin position="263"/>
        <end position="265"/>
    </location>
    <ligand>
        <name>NAD(+)</name>
        <dbReference type="ChEBI" id="CHEBI:57540"/>
    </ligand>
</feature>
<feature type="binding site" evidence="1">
    <location>
        <begin position="287"/>
        <end position="288"/>
    </location>
    <ligand>
        <name>NAD(+)</name>
        <dbReference type="ChEBI" id="CHEBI:57540"/>
    </ligand>
</feature>
<feature type="site" description="Important for catalytic activity for the proton relay mechanism but does not participate directly in the coordination of zinc atom" evidence="1">
    <location>
        <position position="149"/>
    </location>
</feature>
<dbReference type="EC" id="1.1.1.103" evidence="1"/>
<dbReference type="EMBL" id="AE017283">
    <property type="protein sequence ID" value="AAT82153.1"/>
    <property type="molecule type" value="Genomic_DNA"/>
</dbReference>
<dbReference type="RefSeq" id="WP_002515111.1">
    <property type="nucleotide sequence ID" value="NZ_CP025935.1"/>
</dbReference>
<dbReference type="SMR" id="Q6AAR3"/>
<dbReference type="EnsemblBacteria" id="AAT82153">
    <property type="protein sequence ID" value="AAT82153"/>
    <property type="gene ID" value="PPA0402"/>
</dbReference>
<dbReference type="GeneID" id="92856375"/>
<dbReference type="KEGG" id="pac:PPA0402"/>
<dbReference type="eggNOG" id="COG1063">
    <property type="taxonomic scope" value="Bacteria"/>
</dbReference>
<dbReference type="HOGENOM" id="CLU_026673_11_0_11"/>
<dbReference type="UniPathway" id="UPA00046">
    <property type="reaction ID" value="UER00505"/>
</dbReference>
<dbReference type="Proteomes" id="UP000000603">
    <property type="component" value="Chromosome"/>
</dbReference>
<dbReference type="GO" id="GO:0005737">
    <property type="term" value="C:cytoplasm"/>
    <property type="evidence" value="ECO:0007669"/>
    <property type="project" value="UniProtKB-SubCell"/>
</dbReference>
<dbReference type="GO" id="GO:0008743">
    <property type="term" value="F:L-threonine 3-dehydrogenase activity"/>
    <property type="evidence" value="ECO:0007669"/>
    <property type="project" value="UniProtKB-UniRule"/>
</dbReference>
<dbReference type="GO" id="GO:0008270">
    <property type="term" value="F:zinc ion binding"/>
    <property type="evidence" value="ECO:0007669"/>
    <property type="project" value="UniProtKB-UniRule"/>
</dbReference>
<dbReference type="GO" id="GO:0019518">
    <property type="term" value="P:L-threonine catabolic process to glycine"/>
    <property type="evidence" value="ECO:0007669"/>
    <property type="project" value="UniProtKB-UniPathway"/>
</dbReference>
<dbReference type="Gene3D" id="3.90.180.10">
    <property type="entry name" value="Medium-chain alcohol dehydrogenases, catalytic domain"/>
    <property type="match status" value="1"/>
</dbReference>
<dbReference type="Gene3D" id="3.40.50.720">
    <property type="entry name" value="NAD(P)-binding Rossmann-like Domain"/>
    <property type="match status" value="1"/>
</dbReference>
<dbReference type="HAMAP" id="MF_00627">
    <property type="entry name" value="Thr_dehydrog"/>
    <property type="match status" value="1"/>
</dbReference>
<dbReference type="InterPro" id="IPR013149">
    <property type="entry name" value="ADH-like_C"/>
</dbReference>
<dbReference type="InterPro" id="IPR013154">
    <property type="entry name" value="ADH-like_N"/>
</dbReference>
<dbReference type="InterPro" id="IPR002328">
    <property type="entry name" value="ADH_Zn_CS"/>
</dbReference>
<dbReference type="InterPro" id="IPR011032">
    <property type="entry name" value="GroES-like_sf"/>
</dbReference>
<dbReference type="InterPro" id="IPR004627">
    <property type="entry name" value="L-Threonine_3-DHase"/>
</dbReference>
<dbReference type="InterPro" id="IPR036291">
    <property type="entry name" value="NAD(P)-bd_dom_sf"/>
</dbReference>
<dbReference type="InterPro" id="IPR020843">
    <property type="entry name" value="PKS_ER"/>
</dbReference>
<dbReference type="InterPro" id="IPR050129">
    <property type="entry name" value="Zn_alcohol_dh"/>
</dbReference>
<dbReference type="NCBIfam" id="NF003808">
    <property type="entry name" value="PRK05396.1"/>
    <property type="match status" value="1"/>
</dbReference>
<dbReference type="PANTHER" id="PTHR43401">
    <property type="entry name" value="L-THREONINE 3-DEHYDROGENASE"/>
    <property type="match status" value="1"/>
</dbReference>
<dbReference type="PANTHER" id="PTHR43401:SF2">
    <property type="entry name" value="L-THREONINE 3-DEHYDROGENASE"/>
    <property type="match status" value="1"/>
</dbReference>
<dbReference type="Pfam" id="PF08240">
    <property type="entry name" value="ADH_N"/>
    <property type="match status" value="1"/>
</dbReference>
<dbReference type="Pfam" id="PF00107">
    <property type="entry name" value="ADH_zinc_N"/>
    <property type="match status" value="1"/>
</dbReference>
<dbReference type="SMART" id="SM00829">
    <property type="entry name" value="PKS_ER"/>
    <property type="match status" value="1"/>
</dbReference>
<dbReference type="SUPFAM" id="SSF50129">
    <property type="entry name" value="GroES-like"/>
    <property type="match status" value="1"/>
</dbReference>
<dbReference type="SUPFAM" id="SSF51735">
    <property type="entry name" value="NAD(P)-binding Rossmann-fold domains"/>
    <property type="match status" value="1"/>
</dbReference>
<dbReference type="PROSITE" id="PS00059">
    <property type="entry name" value="ADH_ZINC"/>
    <property type="match status" value="1"/>
</dbReference>
<name>TDH_CUTAK</name>
<reference key="1">
    <citation type="journal article" date="2004" name="Science">
        <title>The complete genome sequence of Propionibacterium acnes, a commensal of human skin.</title>
        <authorList>
            <person name="Brueggemann H."/>
            <person name="Henne A."/>
            <person name="Hoster F."/>
            <person name="Liesegang H."/>
            <person name="Wiezer A."/>
            <person name="Strittmatter A."/>
            <person name="Hujer S."/>
            <person name="Duerre P."/>
            <person name="Gottschalk G."/>
        </authorList>
    </citation>
    <scope>NUCLEOTIDE SEQUENCE [LARGE SCALE GENOMIC DNA]</scope>
    <source>
        <strain>DSM 16379 / KPA171202</strain>
    </source>
</reference>
<gene>
    <name evidence="1" type="primary">tdh</name>
    <name type="ordered locus">PPA0402</name>
</gene>
<keyword id="KW-0963">Cytoplasm</keyword>
<keyword id="KW-0479">Metal-binding</keyword>
<keyword id="KW-0520">NAD</keyword>
<keyword id="KW-0560">Oxidoreductase</keyword>
<keyword id="KW-0862">Zinc</keyword>
<evidence type="ECO:0000255" key="1">
    <source>
        <dbReference type="HAMAP-Rule" id="MF_00627"/>
    </source>
</evidence>
<organism>
    <name type="scientific">Cutibacterium acnes (strain DSM 16379 / KPA171202)</name>
    <name type="common">Propionibacterium acnes</name>
    <dbReference type="NCBI Taxonomy" id="267747"/>
    <lineage>
        <taxon>Bacteria</taxon>
        <taxon>Bacillati</taxon>
        <taxon>Actinomycetota</taxon>
        <taxon>Actinomycetes</taxon>
        <taxon>Propionibacteriales</taxon>
        <taxon>Propionibacteriaceae</taxon>
        <taxon>Cutibacterium</taxon>
    </lineage>
</organism>
<accession>Q6AAR3</accession>
<sequence>MKALVKTRPEPGLELVEVPDPVAGPNDVIVKVMRTGICGTDVHIDKWDGWAAKTVHTPLVLGHEFCGEIVELGSEVNDLEVGQFVSGEGHYVCGRCRACLAGKRHLCRNTQGIGYAVNGAYCQYFVMPAGNVWVHHIPDLDPDVAAIFDPFGNAVHTALQFPCLAEDVLVSGAGPIGIMAALVAQFQGARNVVVTDLSDERLELAQQLGLKNAVNVSREGLETVWDRFDMKEGFDIGLEMSGSGTALTSMIDNMTHGGRIALLGTPSTDITLDFSKIIFNMITIQGVTGRQIFETWYTMASLIRSGLDISGIITDRYPITEFREAFDVAGSGHGGKVVMNWECLD</sequence>
<protein>
    <recommendedName>
        <fullName evidence="1">L-threonine 3-dehydrogenase</fullName>
        <shortName evidence="1">TDH</shortName>
        <ecNumber evidence="1">1.1.1.103</ecNumber>
    </recommendedName>
</protein>
<comment type="function">
    <text evidence="1">Catalyzes the NAD(+)-dependent oxidation of L-threonine to 2-amino-3-ketobutyrate.</text>
</comment>
<comment type="catalytic activity">
    <reaction evidence="1">
        <text>L-threonine + NAD(+) = (2S)-2-amino-3-oxobutanoate + NADH + H(+)</text>
        <dbReference type="Rhea" id="RHEA:13161"/>
        <dbReference type="ChEBI" id="CHEBI:15378"/>
        <dbReference type="ChEBI" id="CHEBI:57540"/>
        <dbReference type="ChEBI" id="CHEBI:57926"/>
        <dbReference type="ChEBI" id="CHEBI:57945"/>
        <dbReference type="ChEBI" id="CHEBI:78948"/>
        <dbReference type="EC" id="1.1.1.103"/>
    </reaction>
</comment>
<comment type="cofactor">
    <cofactor evidence="1">
        <name>Zn(2+)</name>
        <dbReference type="ChEBI" id="CHEBI:29105"/>
    </cofactor>
    <text evidence="1">Binds 2 Zn(2+) ions per subunit.</text>
</comment>
<comment type="pathway">
    <text evidence="1">Amino-acid degradation; L-threonine degradation via oxydo-reductase pathway; glycine from L-threonine: step 1/2.</text>
</comment>
<comment type="subunit">
    <text evidence="1">Homotetramer.</text>
</comment>
<comment type="subcellular location">
    <subcellularLocation>
        <location evidence="1">Cytoplasm</location>
    </subcellularLocation>
</comment>
<comment type="similarity">
    <text evidence="1">Belongs to the zinc-containing alcohol dehydrogenase family.</text>
</comment>
<proteinExistence type="inferred from homology"/>